<evidence type="ECO:0000255" key="1">
    <source>
        <dbReference type="HAMAP-Rule" id="MF_00473"/>
    </source>
</evidence>
<evidence type="ECO:0000269" key="2">
    <source>
    </source>
</evidence>
<accession>Q8ZKI4</accession>
<feature type="chain" id="PRO_0000180723" description="Glucose-6-phosphate isomerase">
    <location>
        <begin position="1"/>
        <end position="549"/>
    </location>
</feature>
<feature type="active site" description="Proton donor" evidence="1">
    <location>
        <position position="355"/>
    </location>
</feature>
<feature type="active site" evidence="1">
    <location>
        <position position="386"/>
    </location>
</feature>
<feature type="active site" evidence="1">
    <location>
        <position position="514"/>
    </location>
</feature>
<proteinExistence type="inferred from homology"/>
<name>G6PI_SALTY</name>
<gene>
    <name evidence="1" type="primary">pgi</name>
    <name type="synonym">atbR</name>
    <name type="ordered locus">STM4221</name>
</gene>
<protein>
    <recommendedName>
        <fullName evidence="1">Glucose-6-phosphate isomerase</fullName>
        <shortName evidence="1">GPI</shortName>
        <ecNumber evidence="1">5.3.1.9</ecNumber>
    </recommendedName>
    <alternativeName>
        <fullName evidence="1">Phosphoglucose isomerase</fullName>
        <shortName evidence="1">PGI</shortName>
    </alternativeName>
    <alternativeName>
        <fullName evidence="1">Phosphohexose isomerase</fullName>
        <shortName evidence="1">PHI</shortName>
    </alternativeName>
</protein>
<dbReference type="EC" id="5.3.1.9" evidence="1"/>
<dbReference type="EMBL" id="AE006468">
    <property type="protein sequence ID" value="AAL23045.1"/>
    <property type="molecule type" value="Genomic_DNA"/>
</dbReference>
<dbReference type="RefSeq" id="NP_463086.1">
    <property type="nucleotide sequence ID" value="NC_003197.2"/>
</dbReference>
<dbReference type="RefSeq" id="WP_000790037.1">
    <property type="nucleotide sequence ID" value="NC_003197.2"/>
</dbReference>
<dbReference type="SMR" id="Q8ZKI4"/>
<dbReference type="STRING" id="99287.STM4221"/>
<dbReference type="PaxDb" id="99287-STM4221"/>
<dbReference type="GeneID" id="1255747"/>
<dbReference type="KEGG" id="stm:STM4221"/>
<dbReference type="PATRIC" id="fig|99287.12.peg.4441"/>
<dbReference type="HOGENOM" id="CLU_017947_3_1_6"/>
<dbReference type="OMA" id="DWYRQLW"/>
<dbReference type="PhylomeDB" id="Q8ZKI4"/>
<dbReference type="BioCyc" id="SENT99287:STM4221-MONOMER"/>
<dbReference type="UniPathway" id="UPA00109">
    <property type="reaction ID" value="UER00181"/>
</dbReference>
<dbReference type="UniPathway" id="UPA00138"/>
<dbReference type="Proteomes" id="UP000001014">
    <property type="component" value="Chromosome"/>
</dbReference>
<dbReference type="GO" id="GO:0005829">
    <property type="term" value="C:cytosol"/>
    <property type="evidence" value="ECO:0000318"/>
    <property type="project" value="GO_Central"/>
</dbReference>
<dbReference type="GO" id="GO:0097367">
    <property type="term" value="F:carbohydrate derivative binding"/>
    <property type="evidence" value="ECO:0007669"/>
    <property type="project" value="InterPro"/>
</dbReference>
<dbReference type="GO" id="GO:0004347">
    <property type="term" value="F:glucose-6-phosphate isomerase activity"/>
    <property type="evidence" value="ECO:0000318"/>
    <property type="project" value="GO_Central"/>
</dbReference>
<dbReference type="GO" id="GO:0048029">
    <property type="term" value="F:monosaccharide binding"/>
    <property type="evidence" value="ECO:0000318"/>
    <property type="project" value="GO_Central"/>
</dbReference>
<dbReference type="GO" id="GO:0006094">
    <property type="term" value="P:gluconeogenesis"/>
    <property type="evidence" value="ECO:0000318"/>
    <property type="project" value="GO_Central"/>
</dbReference>
<dbReference type="GO" id="GO:0051156">
    <property type="term" value="P:glucose 6-phosphate metabolic process"/>
    <property type="evidence" value="ECO:0000318"/>
    <property type="project" value="GO_Central"/>
</dbReference>
<dbReference type="GO" id="GO:0006096">
    <property type="term" value="P:glycolytic process"/>
    <property type="evidence" value="ECO:0000318"/>
    <property type="project" value="GO_Central"/>
</dbReference>
<dbReference type="CDD" id="cd05015">
    <property type="entry name" value="SIS_PGI_1"/>
    <property type="match status" value="1"/>
</dbReference>
<dbReference type="CDD" id="cd05016">
    <property type="entry name" value="SIS_PGI_2"/>
    <property type="match status" value="1"/>
</dbReference>
<dbReference type="FunFam" id="1.10.1390.10:FF:000001">
    <property type="entry name" value="Glucose-6-phosphate isomerase"/>
    <property type="match status" value="1"/>
</dbReference>
<dbReference type="FunFam" id="3.40.50.10490:FF:000004">
    <property type="entry name" value="Glucose-6-phosphate isomerase"/>
    <property type="match status" value="1"/>
</dbReference>
<dbReference type="Gene3D" id="1.10.1390.10">
    <property type="match status" value="1"/>
</dbReference>
<dbReference type="Gene3D" id="3.40.50.10490">
    <property type="entry name" value="Glucose-6-phosphate isomerase like protein, domain 1"/>
    <property type="match status" value="2"/>
</dbReference>
<dbReference type="HAMAP" id="MF_00473">
    <property type="entry name" value="G6P_isomerase"/>
    <property type="match status" value="1"/>
</dbReference>
<dbReference type="InterPro" id="IPR001672">
    <property type="entry name" value="G6P_Isomerase"/>
</dbReference>
<dbReference type="InterPro" id="IPR023096">
    <property type="entry name" value="G6P_Isomerase_C"/>
</dbReference>
<dbReference type="InterPro" id="IPR018189">
    <property type="entry name" value="Phosphoglucose_isomerase_CS"/>
</dbReference>
<dbReference type="InterPro" id="IPR046348">
    <property type="entry name" value="SIS_dom_sf"/>
</dbReference>
<dbReference type="InterPro" id="IPR035476">
    <property type="entry name" value="SIS_PGI_1"/>
</dbReference>
<dbReference type="InterPro" id="IPR035482">
    <property type="entry name" value="SIS_PGI_2"/>
</dbReference>
<dbReference type="NCBIfam" id="NF001211">
    <property type="entry name" value="PRK00179.1"/>
    <property type="match status" value="1"/>
</dbReference>
<dbReference type="PANTHER" id="PTHR11469">
    <property type="entry name" value="GLUCOSE-6-PHOSPHATE ISOMERASE"/>
    <property type="match status" value="1"/>
</dbReference>
<dbReference type="PANTHER" id="PTHR11469:SF1">
    <property type="entry name" value="GLUCOSE-6-PHOSPHATE ISOMERASE"/>
    <property type="match status" value="1"/>
</dbReference>
<dbReference type="Pfam" id="PF00342">
    <property type="entry name" value="PGI"/>
    <property type="match status" value="1"/>
</dbReference>
<dbReference type="PRINTS" id="PR00662">
    <property type="entry name" value="G6PISOMERASE"/>
</dbReference>
<dbReference type="SUPFAM" id="SSF53697">
    <property type="entry name" value="SIS domain"/>
    <property type="match status" value="1"/>
</dbReference>
<dbReference type="PROSITE" id="PS00765">
    <property type="entry name" value="P_GLUCOSE_ISOMERASE_1"/>
    <property type="match status" value="1"/>
</dbReference>
<dbReference type="PROSITE" id="PS00174">
    <property type="entry name" value="P_GLUCOSE_ISOMERASE_2"/>
    <property type="match status" value="1"/>
</dbReference>
<dbReference type="PROSITE" id="PS51463">
    <property type="entry name" value="P_GLUCOSE_ISOMERASE_3"/>
    <property type="match status" value="1"/>
</dbReference>
<reference key="1">
    <citation type="journal article" date="2001" name="Nature">
        <title>Complete genome sequence of Salmonella enterica serovar Typhimurium LT2.</title>
        <authorList>
            <person name="McClelland M."/>
            <person name="Sanderson K.E."/>
            <person name="Spieth J."/>
            <person name="Clifton S.W."/>
            <person name="Latreille P."/>
            <person name="Courtney L."/>
            <person name="Porwollik S."/>
            <person name="Ali J."/>
            <person name="Dante M."/>
            <person name="Du F."/>
            <person name="Hou S."/>
            <person name="Layman D."/>
            <person name="Leonard S."/>
            <person name="Nguyen C."/>
            <person name="Scott K."/>
            <person name="Holmes A."/>
            <person name="Grewal N."/>
            <person name="Mulvaney E."/>
            <person name="Ryan E."/>
            <person name="Sun H."/>
            <person name="Florea L."/>
            <person name="Miller W."/>
            <person name="Stoneking T."/>
            <person name="Nhan M."/>
            <person name="Waterston R."/>
            <person name="Wilson R.K."/>
        </authorList>
    </citation>
    <scope>NUCLEOTIDE SEQUENCE [LARGE SCALE GENOMIC DNA]</scope>
    <source>
        <strain>LT2 / SGSC1412 / ATCC 700720</strain>
    </source>
</reference>
<reference key="2">
    <citation type="journal article" date="1998" name="J. Bacteriol.">
        <title>A low pH-inducible, PhoPQ-dependent acid tolerance response protects Salmonella typhimurium against inorganic acid stress.</title>
        <authorList>
            <person name="Bearson B.L."/>
            <person name="Wilson L."/>
            <person name="Foster J.W."/>
        </authorList>
    </citation>
    <scope>FUNCTION</scope>
    <scope>DISRUPTION PHENOTYPE</scope>
    <source>
        <strain>LT2 / SGSC1412 / ATCC 700720</strain>
    </source>
</reference>
<comment type="function">
    <text evidence="1">Catalyzes the reversible isomerization of glucose-6-phosphate to fructose-6-phosphate.</text>
</comment>
<comment type="catalytic activity">
    <reaction evidence="1">
        <text>alpha-D-glucose 6-phosphate = beta-D-fructose 6-phosphate</text>
        <dbReference type="Rhea" id="RHEA:11816"/>
        <dbReference type="ChEBI" id="CHEBI:57634"/>
        <dbReference type="ChEBI" id="CHEBI:58225"/>
        <dbReference type="EC" id="5.3.1.9"/>
    </reaction>
</comment>
<comment type="pathway">
    <text evidence="1">Carbohydrate biosynthesis; gluconeogenesis.</text>
</comment>
<comment type="pathway">
    <text evidence="1">Carbohydrate degradation; glycolysis; D-glyceraldehyde 3-phosphate and glycerone phosphate from D-glucose: step 2/4.</text>
</comment>
<comment type="subcellular location">
    <subcellularLocation>
        <location evidence="1">Cytoplasm</location>
    </subcellularLocation>
</comment>
<comment type="disruption phenotype">
    <text evidence="2">Increases acid tolerance in rpoS mutants, defective in glucose metabolism.</text>
</comment>
<comment type="similarity">
    <text evidence="1">Belongs to the GPI family.</text>
</comment>
<sequence length="549" mass="61429">MKNINPTQTSAWQALQKHYDEMKDVTIAELFANDSDRFAKFSATFDDLMLVDFSKNRITEETLAKLQDLAKETDLAGAIKSMFSGEKINRTEDRAVLHVALRNRSNTPIIVDGKDVMPEVNAVLEKMKTFSQAIISGQWKGYTGKAITDVVNIGIGGSDLGPFMVTEALRPYKNHLTMHFVSNVDGTHIAEVLKKVNPETTLFLVASKTFTTQETMTNAHSARDWFLKTAGDEKHVAKHFAALSTNAKAVGEFGIDTANMFEFWDWVGGRYSLWSAIGLSIILSVGFDNFVELLSGAHAMDKHFSTTPAEKNLPILLALIGIWYNNFFGAETEAILPYDQYMHRFAAYFQQGNMESNGKYVDRNGNAVDYQTGPIIWGEPGTNGQHAFYQLIHQGTKMVPCDFIAPAITHNPLSDHHQKLLSNFFAQTEALAFGKSREVVEQEYRDQGKDPAQLEHVVPFKVFEGNRPTNSILLREITPFSLGALIALYEHKIFTQGVILNIFTFDQWGVELGKQLANRILPELGDDKAISSHDSSTNGLINRYKAWRA</sequence>
<keyword id="KW-0963">Cytoplasm</keyword>
<keyword id="KW-0312">Gluconeogenesis</keyword>
<keyword id="KW-0324">Glycolysis</keyword>
<keyword id="KW-0413">Isomerase</keyword>
<keyword id="KW-1185">Reference proteome</keyword>
<organism>
    <name type="scientific">Salmonella typhimurium (strain LT2 / SGSC1412 / ATCC 700720)</name>
    <dbReference type="NCBI Taxonomy" id="99287"/>
    <lineage>
        <taxon>Bacteria</taxon>
        <taxon>Pseudomonadati</taxon>
        <taxon>Pseudomonadota</taxon>
        <taxon>Gammaproteobacteria</taxon>
        <taxon>Enterobacterales</taxon>
        <taxon>Enterobacteriaceae</taxon>
        <taxon>Salmonella</taxon>
    </lineage>
</organism>